<feature type="chain" id="PRO_1000087108" description="Large ribosomal subunit protein uL13">
    <location>
        <begin position="1"/>
        <end position="145"/>
    </location>
</feature>
<proteinExistence type="inferred from homology"/>
<reference key="1">
    <citation type="submission" date="2007-06" db="EMBL/GenBank/DDBJ databases">
        <title>Complete sequence of chromosome of Staphylococcus aureus subsp. aureus JH1.</title>
        <authorList>
            <consortium name="US DOE Joint Genome Institute"/>
            <person name="Copeland A."/>
            <person name="Lucas S."/>
            <person name="Lapidus A."/>
            <person name="Barry K."/>
            <person name="Detter J.C."/>
            <person name="Glavina del Rio T."/>
            <person name="Hammon N."/>
            <person name="Israni S."/>
            <person name="Dalin E."/>
            <person name="Tice H."/>
            <person name="Pitluck S."/>
            <person name="Chain P."/>
            <person name="Malfatti S."/>
            <person name="Shin M."/>
            <person name="Vergez L."/>
            <person name="Schmutz J."/>
            <person name="Larimer F."/>
            <person name="Land M."/>
            <person name="Hauser L."/>
            <person name="Kyrpides N."/>
            <person name="Ivanova N."/>
            <person name="Tomasz A."/>
            <person name="Richardson P."/>
        </authorList>
    </citation>
    <scope>NUCLEOTIDE SEQUENCE [LARGE SCALE GENOMIC DNA]</scope>
    <source>
        <strain>JH1</strain>
    </source>
</reference>
<comment type="function">
    <text evidence="1">This protein is one of the early assembly proteins of the 50S ribosomal subunit, although it is not seen to bind rRNA by itself. It is important during the early stages of 50S assembly.</text>
</comment>
<comment type="subunit">
    <text evidence="1">Part of the 50S ribosomal subunit.</text>
</comment>
<comment type="similarity">
    <text evidence="1">Belongs to the universal ribosomal protein uL13 family.</text>
</comment>
<dbReference type="EMBL" id="CP000736">
    <property type="protein sequence ID" value="ABR53111.1"/>
    <property type="molecule type" value="Genomic_DNA"/>
</dbReference>
<dbReference type="SMR" id="A6U3U3"/>
<dbReference type="KEGG" id="sah:SaurJH1_2286"/>
<dbReference type="HOGENOM" id="CLU_082184_2_2_9"/>
<dbReference type="GO" id="GO:0022625">
    <property type="term" value="C:cytosolic large ribosomal subunit"/>
    <property type="evidence" value="ECO:0007669"/>
    <property type="project" value="TreeGrafter"/>
</dbReference>
<dbReference type="GO" id="GO:0003729">
    <property type="term" value="F:mRNA binding"/>
    <property type="evidence" value="ECO:0007669"/>
    <property type="project" value="TreeGrafter"/>
</dbReference>
<dbReference type="GO" id="GO:0003735">
    <property type="term" value="F:structural constituent of ribosome"/>
    <property type="evidence" value="ECO:0007669"/>
    <property type="project" value="InterPro"/>
</dbReference>
<dbReference type="GO" id="GO:0017148">
    <property type="term" value="P:negative regulation of translation"/>
    <property type="evidence" value="ECO:0007669"/>
    <property type="project" value="TreeGrafter"/>
</dbReference>
<dbReference type="GO" id="GO:0006412">
    <property type="term" value="P:translation"/>
    <property type="evidence" value="ECO:0007669"/>
    <property type="project" value="UniProtKB-UniRule"/>
</dbReference>
<dbReference type="CDD" id="cd00392">
    <property type="entry name" value="Ribosomal_L13"/>
    <property type="match status" value="1"/>
</dbReference>
<dbReference type="FunFam" id="3.90.1180.10:FF:000001">
    <property type="entry name" value="50S ribosomal protein L13"/>
    <property type="match status" value="1"/>
</dbReference>
<dbReference type="Gene3D" id="3.90.1180.10">
    <property type="entry name" value="Ribosomal protein L13"/>
    <property type="match status" value="1"/>
</dbReference>
<dbReference type="HAMAP" id="MF_01366">
    <property type="entry name" value="Ribosomal_uL13"/>
    <property type="match status" value="1"/>
</dbReference>
<dbReference type="InterPro" id="IPR005822">
    <property type="entry name" value="Ribosomal_uL13"/>
</dbReference>
<dbReference type="InterPro" id="IPR005823">
    <property type="entry name" value="Ribosomal_uL13_bac-type"/>
</dbReference>
<dbReference type="InterPro" id="IPR023563">
    <property type="entry name" value="Ribosomal_uL13_CS"/>
</dbReference>
<dbReference type="InterPro" id="IPR036899">
    <property type="entry name" value="Ribosomal_uL13_sf"/>
</dbReference>
<dbReference type="NCBIfam" id="TIGR01066">
    <property type="entry name" value="rplM_bact"/>
    <property type="match status" value="1"/>
</dbReference>
<dbReference type="PANTHER" id="PTHR11545:SF2">
    <property type="entry name" value="LARGE RIBOSOMAL SUBUNIT PROTEIN UL13M"/>
    <property type="match status" value="1"/>
</dbReference>
<dbReference type="PANTHER" id="PTHR11545">
    <property type="entry name" value="RIBOSOMAL PROTEIN L13"/>
    <property type="match status" value="1"/>
</dbReference>
<dbReference type="Pfam" id="PF00572">
    <property type="entry name" value="Ribosomal_L13"/>
    <property type="match status" value="1"/>
</dbReference>
<dbReference type="PIRSF" id="PIRSF002181">
    <property type="entry name" value="Ribosomal_L13"/>
    <property type="match status" value="1"/>
</dbReference>
<dbReference type="SUPFAM" id="SSF52161">
    <property type="entry name" value="Ribosomal protein L13"/>
    <property type="match status" value="1"/>
</dbReference>
<dbReference type="PROSITE" id="PS00783">
    <property type="entry name" value="RIBOSOMAL_L13"/>
    <property type="match status" value="1"/>
</dbReference>
<protein>
    <recommendedName>
        <fullName evidence="1">Large ribosomal subunit protein uL13</fullName>
    </recommendedName>
    <alternativeName>
        <fullName evidence="2">50S ribosomal protein L13</fullName>
    </alternativeName>
</protein>
<name>RL13_STAA2</name>
<accession>A6U3U3</accession>
<sequence>MRQTFMANESNIERKWYVIDAEGQTLGRLSSEVASILRGKNKVTYTPHVDTGDYVIVINASKIEFTGNKETDKVYYRHSNHPGGIKSITAGELRRTNPERLIENSIKGMLPSTRLGEKQGKKLFVYGGAEHPHAAQQPENYELRG</sequence>
<organism>
    <name type="scientific">Staphylococcus aureus (strain JH1)</name>
    <dbReference type="NCBI Taxonomy" id="359787"/>
    <lineage>
        <taxon>Bacteria</taxon>
        <taxon>Bacillati</taxon>
        <taxon>Bacillota</taxon>
        <taxon>Bacilli</taxon>
        <taxon>Bacillales</taxon>
        <taxon>Staphylococcaceae</taxon>
        <taxon>Staphylococcus</taxon>
    </lineage>
</organism>
<gene>
    <name evidence="1" type="primary">rplM</name>
    <name type="ordered locus">SaurJH1_2286</name>
</gene>
<evidence type="ECO:0000255" key="1">
    <source>
        <dbReference type="HAMAP-Rule" id="MF_01366"/>
    </source>
</evidence>
<evidence type="ECO:0000305" key="2"/>
<keyword id="KW-0687">Ribonucleoprotein</keyword>
<keyword id="KW-0689">Ribosomal protein</keyword>